<protein>
    <recommendedName>
        <fullName evidence="1">2-succinylbenzoate--CoA ligase</fullName>
        <ecNumber evidence="1">6.2.1.26</ecNumber>
    </recommendedName>
    <alternativeName>
        <fullName evidence="1">o-succinylbenzoyl-CoA synthetase</fullName>
        <shortName evidence="1">OSB-CoA synthetase</shortName>
    </alternativeName>
</protein>
<proteinExistence type="inferred from homology"/>
<sequence>MNFWLQEQAQSNGNRLAIVTNQLSLTYEELYHRAKTIAEYLTSLNQKRIGLYISNDIDSVVLIHACWLAHIEIAMINTRLTRHEMINQMNSVDIATIVHTLPLELEGFNLYHFNDLTQLDKHDVSGYKFNLESIASIMFTSGTTGPQKAVPQTFNNHLASAKGCKQSLGFEQNTVWLSVLPIYHISGLSVILRAVIEGFTVRLVKKFQTDDMLTQIKTYPITHMSLVPQTLKWLMDAGLTQPFSLEKILLGGAKLSPQLIEQALTYRLPVYNSFGMTETCSQFLTASPQMLKERFDTVGKPSENVEVKIKNPNAYGHGELLIKGENVMNGYLYPKYLKDTFDNDGYFQTGDIAEIDDEGYVIIYDRRKDLIISGGENIYPYQIETIAKDFEGIEDAVCVGISDDTWGQVPILYYVTNQDINQTELIEHFENHLARYKIPKKYYQVKSLPYTSTGKLQRKKVKSEDLNEGKNNES</sequence>
<gene>
    <name evidence="1" type="primary">menE</name>
    <name type="ordered locus">SERP1358</name>
</gene>
<reference key="1">
    <citation type="journal article" date="2005" name="J. Bacteriol.">
        <title>Insights on evolution of virulence and resistance from the complete genome analysis of an early methicillin-resistant Staphylococcus aureus strain and a biofilm-producing methicillin-resistant Staphylococcus epidermidis strain.</title>
        <authorList>
            <person name="Gill S.R."/>
            <person name="Fouts D.E."/>
            <person name="Archer G.L."/>
            <person name="Mongodin E.F."/>
            <person name="DeBoy R.T."/>
            <person name="Ravel J."/>
            <person name="Paulsen I.T."/>
            <person name="Kolonay J.F."/>
            <person name="Brinkac L.M."/>
            <person name="Beanan M.J."/>
            <person name="Dodson R.J."/>
            <person name="Daugherty S.C."/>
            <person name="Madupu R."/>
            <person name="Angiuoli S.V."/>
            <person name="Durkin A.S."/>
            <person name="Haft D.H."/>
            <person name="Vamathevan J.J."/>
            <person name="Khouri H."/>
            <person name="Utterback T.R."/>
            <person name="Lee C."/>
            <person name="Dimitrov G."/>
            <person name="Jiang L."/>
            <person name="Qin H."/>
            <person name="Weidman J."/>
            <person name="Tran K."/>
            <person name="Kang K.H."/>
            <person name="Hance I.R."/>
            <person name="Nelson K.E."/>
            <person name="Fraser C.M."/>
        </authorList>
    </citation>
    <scope>NUCLEOTIDE SEQUENCE [LARGE SCALE GENOMIC DNA]</scope>
    <source>
        <strain>ATCC 35984 / DSM 28319 / BCRC 17069 / CCUG 31568 / BM 3577 / RP62A</strain>
    </source>
</reference>
<comment type="function">
    <text evidence="1">Converts 2-succinylbenzoate (OSB) to 2-succinylbenzoyl-CoA (OSB-CoA).</text>
</comment>
<comment type="catalytic activity">
    <reaction evidence="1">
        <text>2-succinylbenzoate + ATP + CoA = 2-succinylbenzoyl-CoA + AMP + diphosphate</text>
        <dbReference type="Rhea" id="RHEA:17009"/>
        <dbReference type="ChEBI" id="CHEBI:18325"/>
        <dbReference type="ChEBI" id="CHEBI:30616"/>
        <dbReference type="ChEBI" id="CHEBI:33019"/>
        <dbReference type="ChEBI" id="CHEBI:57287"/>
        <dbReference type="ChEBI" id="CHEBI:57364"/>
        <dbReference type="ChEBI" id="CHEBI:456215"/>
        <dbReference type="EC" id="6.2.1.26"/>
    </reaction>
</comment>
<comment type="pathway">
    <text evidence="1">Quinol/quinone metabolism; 1,4-dihydroxy-2-naphthoate biosynthesis; 1,4-dihydroxy-2-naphthoate from chorismate: step 5/7.</text>
</comment>
<comment type="pathway">
    <text evidence="1">Quinol/quinone metabolism; menaquinone biosynthesis.</text>
</comment>
<comment type="similarity">
    <text evidence="1">Belongs to the ATP-dependent AMP-binding enzyme family. MenE subfamily.</text>
</comment>
<feature type="chain" id="PRO_0000193174" description="2-succinylbenzoate--CoA ligase">
    <location>
        <begin position="1"/>
        <end position="474"/>
    </location>
</feature>
<dbReference type="EC" id="6.2.1.26" evidence="1"/>
<dbReference type="EMBL" id="CP000029">
    <property type="protein sequence ID" value="AAW54723.1"/>
    <property type="molecule type" value="Genomic_DNA"/>
</dbReference>
<dbReference type="RefSeq" id="WP_002456429.1">
    <property type="nucleotide sequence ID" value="NC_002976.3"/>
</dbReference>
<dbReference type="SMR" id="Q5HNB2"/>
<dbReference type="STRING" id="176279.SERP1358"/>
<dbReference type="GeneID" id="50018429"/>
<dbReference type="KEGG" id="ser:SERP1358"/>
<dbReference type="eggNOG" id="COG0318">
    <property type="taxonomic scope" value="Bacteria"/>
</dbReference>
<dbReference type="HOGENOM" id="CLU_000022_59_0_9"/>
<dbReference type="UniPathway" id="UPA00079"/>
<dbReference type="UniPathway" id="UPA01057">
    <property type="reaction ID" value="UER00166"/>
</dbReference>
<dbReference type="Proteomes" id="UP000000531">
    <property type="component" value="Chromosome"/>
</dbReference>
<dbReference type="GO" id="GO:0005524">
    <property type="term" value="F:ATP binding"/>
    <property type="evidence" value="ECO:0007669"/>
    <property type="project" value="UniProtKB-KW"/>
</dbReference>
<dbReference type="GO" id="GO:0031956">
    <property type="term" value="F:medium-chain fatty acid-CoA ligase activity"/>
    <property type="evidence" value="ECO:0007669"/>
    <property type="project" value="TreeGrafter"/>
</dbReference>
<dbReference type="GO" id="GO:0008756">
    <property type="term" value="F:o-succinylbenzoate-CoA ligase activity"/>
    <property type="evidence" value="ECO:0007669"/>
    <property type="project" value="UniProtKB-UniRule"/>
</dbReference>
<dbReference type="GO" id="GO:0006631">
    <property type="term" value="P:fatty acid metabolic process"/>
    <property type="evidence" value="ECO:0007669"/>
    <property type="project" value="TreeGrafter"/>
</dbReference>
<dbReference type="GO" id="GO:0009234">
    <property type="term" value="P:menaquinone biosynthetic process"/>
    <property type="evidence" value="ECO:0007669"/>
    <property type="project" value="UniProtKB-UniRule"/>
</dbReference>
<dbReference type="Gene3D" id="3.30.300.30">
    <property type="match status" value="1"/>
</dbReference>
<dbReference type="Gene3D" id="3.40.50.12780">
    <property type="entry name" value="N-terminal domain of ligase-like"/>
    <property type="match status" value="1"/>
</dbReference>
<dbReference type="HAMAP" id="MF_00731">
    <property type="entry name" value="MenE"/>
    <property type="match status" value="1"/>
</dbReference>
<dbReference type="InterPro" id="IPR025110">
    <property type="entry name" value="AMP-bd_C"/>
</dbReference>
<dbReference type="InterPro" id="IPR045851">
    <property type="entry name" value="AMP-bd_C_sf"/>
</dbReference>
<dbReference type="InterPro" id="IPR000873">
    <property type="entry name" value="AMP-dep_synth/lig_dom"/>
</dbReference>
<dbReference type="InterPro" id="IPR042099">
    <property type="entry name" value="ANL_N_sf"/>
</dbReference>
<dbReference type="InterPro" id="IPR010192">
    <property type="entry name" value="MenE"/>
</dbReference>
<dbReference type="NCBIfam" id="TIGR01923">
    <property type="entry name" value="menE"/>
    <property type="match status" value="1"/>
</dbReference>
<dbReference type="PANTHER" id="PTHR43201">
    <property type="entry name" value="ACYL-COA SYNTHETASE"/>
    <property type="match status" value="1"/>
</dbReference>
<dbReference type="PANTHER" id="PTHR43201:SF5">
    <property type="entry name" value="MEDIUM-CHAIN ACYL-COA LIGASE ACSF2, MITOCHONDRIAL"/>
    <property type="match status" value="1"/>
</dbReference>
<dbReference type="Pfam" id="PF00501">
    <property type="entry name" value="AMP-binding"/>
    <property type="match status" value="1"/>
</dbReference>
<dbReference type="Pfam" id="PF13193">
    <property type="entry name" value="AMP-binding_C"/>
    <property type="match status" value="1"/>
</dbReference>
<dbReference type="SUPFAM" id="SSF56801">
    <property type="entry name" value="Acetyl-CoA synthetase-like"/>
    <property type="match status" value="1"/>
</dbReference>
<evidence type="ECO:0000255" key="1">
    <source>
        <dbReference type="HAMAP-Rule" id="MF_00731"/>
    </source>
</evidence>
<keyword id="KW-0067">ATP-binding</keyword>
<keyword id="KW-0436">Ligase</keyword>
<keyword id="KW-0474">Menaquinone biosynthesis</keyword>
<keyword id="KW-0547">Nucleotide-binding</keyword>
<keyword id="KW-1185">Reference proteome</keyword>
<name>MENE_STAEQ</name>
<organism>
    <name type="scientific">Staphylococcus epidermidis (strain ATCC 35984 / DSM 28319 / BCRC 17069 / CCUG 31568 / BM 3577 / RP62A)</name>
    <dbReference type="NCBI Taxonomy" id="176279"/>
    <lineage>
        <taxon>Bacteria</taxon>
        <taxon>Bacillati</taxon>
        <taxon>Bacillota</taxon>
        <taxon>Bacilli</taxon>
        <taxon>Bacillales</taxon>
        <taxon>Staphylococcaceae</taxon>
        <taxon>Staphylococcus</taxon>
    </lineage>
</organism>
<accession>Q5HNB2</accession>